<proteinExistence type="inferred from homology"/>
<keyword id="KW-0028">Amino-acid biosynthesis</keyword>
<keyword id="KW-0057">Aromatic amino acid biosynthesis</keyword>
<keyword id="KW-0456">Lyase</keyword>
<keyword id="KW-1185">Reference proteome</keyword>
<keyword id="KW-0822">Tryptophan biosynthesis</keyword>
<gene>
    <name evidence="1" type="primary">trpA</name>
    <name type="ordered locus">azo1048</name>
</gene>
<protein>
    <recommendedName>
        <fullName evidence="1">Tryptophan synthase alpha chain</fullName>
        <ecNumber evidence="1">4.2.1.20</ecNumber>
    </recommendedName>
</protein>
<name>TRPA_AZOSB</name>
<reference key="1">
    <citation type="journal article" date="2006" name="Nat. Biotechnol.">
        <title>Complete genome of the mutualistic, N2-fixing grass endophyte Azoarcus sp. strain BH72.</title>
        <authorList>
            <person name="Krause A."/>
            <person name="Ramakumar A."/>
            <person name="Bartels D."/>
            <person name="Battistoni F."/>
            <person name="Bekel T."/>
            <person name="Boch J."/>
            <person name="Boehm M."/>
            <person name="Friedrich F."/>
            <person name="Hurek T."/>
            <person name="Krause L."/>
            <person name="Linke B."/>
            <person name="McHardy A.C."/>
            <person name="Sarkar A."/>
            <person name="Schneiker S."/>
            <person name="Syed A.A."/>
            <person name="Thauer R."/>
            <person name="Vorhoelter F.-J."/>
            <person name="Weidner S."/>
            <person name="Puehler A."/>
            <person name="Reinhold-Hurek B."/>
            <person name="Kaiser O."/>
            <person name="Goesmann A."/>
        </authorList>
    </citation>
    <scope>NUCLEOTIDE SEQUENCE [LARGE SCALE GENOMIC DNA]</scope>
    <source>
        <strain>BH72</strain>
    </source>
</reference>
<dbReference type="EC" id="4.2.1.20" evidence="1"/>
<dbReference type="EMBL" id="AM406670">
    <property type="protein sequence ID" value="CAL93665.1"/>
    <property type="molecule type" value="Genomic_DNA"/>
</dbReference>
<dbReference type="RefSeq" id="WP_011764782.1">
    <property type="nucleotide sequence ID" value="NC_008702.1"/>
</dbReference>
<dbReference type="SMR" id="A1K4B0"/>
<dbReference type="STRING" id="62928.azo1048"/>
<dbReference type="KEGG" id="aoa:dqs_1156"/>
<dbReference type="KEGG" id="azo:azo1048"/>
<dbReference type="eggNOG" id="COG0159">
    <property type="taxonomic scope" value="Bacteria"/>
</dbReference>
<dbReference type="HOGENOM" id="CLU_016734_0_0_4"/>
<dbReference type="OrthoDB" id="9804578at2"/>
<dbReference type="UniPathway" id="UPA00035">
    <property type="reaction ID" value="UER00044"/>
</dbReference>
<dbReference type="Proteomes" id="UP000002588">
    <property type="component" value="Chromosome"/>
</dbReference>
<dbReference type="GO" id="GO:0005829">
    <property type="term" value="C:cytosol"/>
    <property type="evidence" value="ECO:0007669"/>
    <property type="project" value="TreeGrafter"/>
</dbReference>
<dbReference type="GO" id="GO:0004834">
    <property type="term" value="F:tryptophan synthase activity"/>
    <property type="evidence" value="ECO:0007669"/>
    <property type="project" value="UniProtKB-UniRule"/>
</dbReference>
<dbReference type="CDD" id="cd04724">
    <property type="entry name" value="Tryptophan_synthase_alpha"/>
    <property type="match status" value="1"/>
</dbReference>
<dbReference type="FunFam" id="3.20.20.70:FF:000037">
    <property type="entry name" value="Tryptophan synthase alpha chain"/>
    <property type="match status" value="1"/>
</dbReference>
<dbReference type="Gene3D" id="3.20.20.70">
    <property type="entry name" value="Aldolase class I"/>
    <property type="match status" value="1"/>
</dbReference>
<dbReference type="HAMAP" id="MF_00131">
    <property type="entry name" value="Trp_synth_alpha"/>
    <property type="match status" value="1"/>
</dbReference>
<dbReference type="InterPro" id="IPR013785">
    <property type="entry name" value="Aldolase_TIM"/>
</dbReference>
<dbReference type="InterPro" id="IPR011060">
    <property type="entry name" value="RibuloseP-bd_barrel"/>
</dbReference>
<dbReference type="InterPro" id="IPR018204">
    <property type="entry name" value="Trp_synthase_alpha_AS"/>
</dbReference>
<dbReference type="InterPro" id="IPR002028">
    <property type="entry name" value="Trp_synthase_suA"/>
</dbReference>
<dbReference type="NCBIfam" id="TIGR00262">
    <property type="entry name" value="trpA"/>
    <property type="match status" value="1"/>
</dbReference>
<dbReference type="PANTHER" id="PTHR43406:SF1">
    <property type="entry name" value="TRYPTOPHAN SYNTHASE ALPHA CHAIN, CHLOROPLASTIC"/>
    <property type="match status" value="1"/>
</dbReference>
<dbReference type="PANTHER" id="PTHR43406">
    <property type="entry name" value="TRYPTOPHAN SYNTHASE, ALPHA CHAIN"/>
    <property type="match status" value="1"/>
</dbReference>
<dbReference type="Pfam" id="PF00290">
    <property type="entry name" value="Trp_syntA"/>
    <property type="match status" value="1"/>
</dbReference>
<dbReference type="SUPFAM" id="SSF51366">
    <property type="entry name" value="Ribulose-phoshate binding barrel"/>
    <property type="match status" value="1"/>
</dbReference>
<dbReference type="PROSITE" id="PS00167">
    <property type="entry name" value="TRP_SYNTHASE_ALPHA"/>
    <property type="match status" value="1"/>
</dbReference>
<accession>A1K4B0</accession>
<organism>
    <name type="scientific">Azoarcus sp. (strain BH72)</name>
    <dbReference type="NCBI Taxonomy" id="418699"/>
    <lineage>
        <taxon>Bacteria</taxon>
        <taxon>Pseudomonadati</taxon>
        <taxon>Pseudomonadota</taxon>
        <taxon>Betaproteobacteria</taxon>
        <taxon>Rhodocyclales</taxon>
        <taxon>Zoogloeaceae</taxon>
        <taxon>Azoarcus</taxon>
    </lineage>
</organism>
<comment type="function">
    <text evidence="1">The alpha subunit is responsible for the aldol cleavage of indoleglycerol phosphate to indole and glyceraldehyde 3-phosphate.</text>
</comment>
<comment type="catalytic activity">
    <reaction evidence="1">
        <text>(1S,2R)-1-C-(indol-3-yl)glycerol 3-phosphate + L-serine = D-glyceraldehyde 3-phosphate + L-tryptophan + H2O</text>
        <dbReference type="Rhea" id="RHEA:10532"/>
        <dbReference type="ChEBI" id="CHEBI:15377"/>
        <dbReference type="ChEBI" id="CHEBI:33384"/>
        <dbReference type="ChEBI" id="CHEBI:57912"/>
        <dbReference type="ChEBI" id="CHEBI:58866"/>
        <dbReference type="ChEBI" id="CHEBI:59776"/>
        <dbReference type="EC" id="4.2.1.20"/>
    </reaction>
</comment>
<comment type="pathway">
    <text evidence="1">Amino-acid biosynthesis; L-tryptophan biosynthesis; L-tryptophan from chorismate: step 5/5.</text>
</comment>
<comment type="subunit">
    <text evidence="1">Tetramer of two alpha and two beta chains.</text>
</comment>
<comment type="similarity">
    <text evidence="1">Belongs to the TrpA family.</text>
</comment>
<feature type="chain" id="PRO_1000018166" description="Tryptophan synthase alpha chain">
    <location>
        <begin position="1"/>
        <end position="271"/>
    </location>
</feature>
<feature type="active site" description="Proton acceptor" evidence="1">
    <location>
        <position position="49"/>
    </location>
</feature>
<feature type="active site" description="Proton acceptor" evidence="1">
    <location>
        <position position="60"/>
    </location>
</feature>
<evidence type="ECO:0000255" key="1">
    <source>
        <dbReference type="HAMAP-Rule" id="MF_00131"/>
    </source>
</evidence>
<sequence length="271" mass="28616">MSKIQTTFQRLQAQGRKALIPFITAGDPDPTLTVPLMHALVAGGADIIELGVPFSDPMADGPTIQRASERALAQGMTLRKVLQAVREFRSGDADTPVVLMGYANPIEAMGQQAFVAAAREAGVDGALVVDYPPEECVEFAAASKAAGLDPIFLLAPTSSEQRFADVARAGSGYIYYVSLKGVTGAGTLDLDEVARRIPQIRAAVGMPVGVGFGIRDAESARRIGAVADAVVIGSRIIEEIERSPREQACSNVTHFVKGIREALDTLPGVKQ</sequence>